<feature type="chain" id="PRO_0000313749" description="T-complex protein 11-like protein 2">
    <location>
        <begin position="1"/>
        <end position="519"/>
    </location>
</feature>
<feature type="region of interest" description="Disordered" evidence="3">
    <location>
        <begin position="1"/>
        <end position="57"/>
    </location>
</feature>
<feature type="compositionally biased region" description="Low complexity" evidence="3">
    <location>
        <begin position="17"/>
        <end position="29"/>
    </location>
</feature>
<feature type="compositionally biased region" description="Low complexity" evidence="3">
    <location>
        <begin position="36"/>
        <end position="55"/>
    </location>
</feature>
<feature type="modified residue" description="Phosphoserine" evidence="1">
    <location>
        <position position="16"/>
    </location>
</feature>
<gene>
    <name evidence="2" type="primary">TCP11L2</name>
</gene>
<comment type="function">
    <text evidence="4">Promotes the migration of muscle-derived satellite cells (MDSCs) during differentiation throught interaction with FMNL2 and therefore may participate in microfilament assembly.</text>
</comment>
<comment type="subunit">
    <text evidence="4">Interacts with FMNL2; this interaction promotes muscle-derived satellite cell (MDSC) migration and differentiation.</text>
</comment>
<comment type="subcellular location">
    <subcellularLocation>
        <location evidence="6">Cytoplasm</location>
        <location evidence="6">Cytoskeleton</location>
    </subcellularLocation>
    <text evidence="4">Accumulates around the actin complex before the formation of microfilament bundles and microtubule extension.</text>
</comment>
<comment type="induction">
    <text evidence="4">Gradually increased during muscle-derived satellite cell (MDSC) differentiation.</text>
</comment>
<comment type="similarity">
    <text evidence="5">Belongs to the TCP11 family.</text>
</comment>
<organism>
    <name type="scientific">Bos taurus</name>
    <name type="common">Bovine</name>
    <dbReference type="NCBI Taxonomy" id="9913"/>
    <lineage>
        <taxon>Eukaryota</taxon>
        <taxon>Metazoa</taxon>
        <taxon>Chordata</taxon>
        <taxon>Craniata</taxon>
        <taxon>Vertebrata</taxon>
        <taxon>Euteleostomi</taxon>
        <taxon>Mammalia</taxon>
        <taxon>Eutheria</taxon>
        <taxon>Laurasiatheria</taxon>
        <taxon>Artiodactyla</taxon>
        <taxon>Ruminantia</taxon>
        <taxon>Pecora</taxon>
        <taxon>Bovidae</taxon>
        <taxon>Bovinae</taxon>
        <taxon>Bos</taxon>
    </lineage>
</organism>
<accession>A7Z033</accession>
<keyword id="KW-0963">Cytoplasm</keyword>
<keyword id="KW-0206">Cytoskeleton</keyword>
<keyword id="KW-0597">Phosphoprotein</keyword>
<keyword id="KW-1185">Reference proteome</keyword>
<protein>
    <recommendedName>
        <fullName evidence="2">T-complex protein 11-like protein 2</fullName>
    </recommendedName>
</protein>
<sequence>MPFNGEKQCVSEDQPSDSDSSRFSESMASLSDYECSRQSFTSDSSSKSSSPASTSPPRVVTFDEVMAAARNLSNMTLAHEIAVNENFQLKQDALPESSLAGRVRHIVHQAFWDVLESELNAEPPEYEHAIKLFEEIREILLSFLTPGGNRLRNQICEVLDTDLIRQQAEHSAVDIQGLANYVISTMGKLCAPVRDDDIRELKATSNIVEVLRQIFHVLDLMKMDMVNFTIRSLRPHLQRQLVDYERTKFQEILEETPSALNQTTEWIKESVHEELLSLSEATLTPGAENNSKPSLSPTLVLNNSYLKLLQWDYQKKELPETLMTDGARLQELTEKLNQLKMIACLALITNNMVGALTEGLPELAVRLKRISAVLLEGMNKETFNLKEVLNSIGIQICVEVNKTLMERGLPTLNAEVQDNLVGQFSSIEEEDNPIWSLIDKRIQLYMKSLLCLPSPPRCMPPVPGGLAVVQQELESLGLQYANIVNLNKQVYGPFYANILRKLLFGEEATGKAEASSSTN</sequence>
<dbReference type="EMBL" id="BC153231">
    <property type="protein sequence ID" value="AAI53232.1"/>
    <property type="molecule type" value="mRNA"/>
</dbReference>
<dbReference type="RefSeq" id="NP_001098901.1">
    <property type="nucleotide sequence ID" value="NM_001105431.1"/>
</dbReference>
<dbReference type="RefSeq" id="XP_059742645.1">
    <property type="nucleotide sequence ID" value="XM_059886662.1"/>
</dbReference>
<dbReference type="FunCoup" id="A7Z033">
    <property type="interactions" value="960"/>
</dbReference>
<dbReference type="STRING" id="9913.ENSBTAP00000002748"/>
<dbReference type="PaxDb" id="9913-ENSBTAP00000002748"/>
<dbReference type="Ensembl" id="ENSBTAT00000002748.5">
    <property type="protein sequence ID" value="ENSBTAP00000002748.4"/>
    <property type="gene ID" value="ENSBTAG00000002127.6"/>
</dbReference>
<dbReference type="GeneID" id="541012"/>
<dbReference type="KEGG" id="bta:541012"/>
<dbReference type="CTD" id="255394"/>
<dbReference type="VEuPathDB" id="HostDB:ENSBTAG00000002127"/>
<dbReference type="VGNC" id="VGNC:35704">
    <property type="gene designation" value="TCP11L2"/>
</dbReference>
<dbReference type="eggNOG" id="KOG1981">
    <property type="taxonomic scope" value="Eukaryota"/>
</dbReference>
<dbReference type="GeneTree" id="ENSGT00940000157835"/>
<dbReference type="HOGENOM" id="CLU_026469_0_0_1"/>
<dbReference type="InParanoid" id="A7Z033"/>
<dbReference type="OMA" id="YVINTMG"/>
<dbReference type="OrthoDB" id="276323at2759"/>
<dbReference type="TreeFam" id="TF313385"/>
<dbReference type="Proteomes" id="UP000009136">
    <property type="component" value="Chromosome 5"/>
</dbReference>
<dbReference type="Bgee" id="ENSBTAG00000002127">
    <property type="expression patterns" value="Expressed in thymus and 104 other cell types or tissues"/>
</dbReference>
<dbReference type="GO" id="GO:0005737">
    <property type="term" value="C:cytoplasm"/>
    <property type="evidence" value="ECO:0000314"/>
    <property type="project" value="UniProtKB"/>
</dbReference>
<dbReference type="GO" id="GO:0005856">
    <property type="term" value="C:cytoskeleton"/>
    <property type="evidence" value="ECO:0007669"/>
    <property type="project" value="UniProtKB-SubCell"/>
</dbReference>
<dbReference type="GO" id="GO:0014812">
    <property type="term" value="P:muscle cell migration"/>
    <property type="evidence" value="ECO:0000315"/>
    <property type="project" value="UniProtKB"/>
</dbReference>
<dbReference type="GO" id="GO:0007165">
    <property type="term" value="P:signal transduction"/>
    <property type="evidence" value="ECO:0000318"/>
    <property type="project" value="GO_Central"/>
</dbReference>
<dbReference type="InterPro" id="IPR008862">
    <property type="entry name" value="Tcp11"/>
</dbReference>
<dbReference type="PANTHER" id="PTHR12832:SF17">
    <property type="entry name" value="T-COMPLEX PROTEIN 11-LIKE PROTEIN 2"/>
    <property type="match status" value="1"/>
</dbReference>
<dbReference type="PANTHER" id="PTHR12832">
    <property type="entry name" value="TESTIS-SPECIFIC PROTEIN PBS13 T-COMPLEX 11"/>
    <property type="match status" value="1"/>
</dbReference>
<dbReference type="Pfam" id="PF05794">
    <property type="entry name" value="Tcp11"/>
    <property type="match status" value="1"/>
</dbReference>
<name>T11L2_BOVIN</name>
<proteinExistence type="evidence at protein level"/>
<reference key="1">
    <citation type="submission" date="2007-09" db="EMBL/GenBank/DDBJ databases">
        <authorList>
            <consortium name="NIH - Mammalian Gene Collection (MGC) project"/>
        </authorList>
    </citation>
    <scope>NUCLEOTIDE SEQUENCE [LARGE SCALE MRNA]</scope>
    <source>
        <strain>Hereford</strain>
        <tissue>Hippocampus</tissue>
    </source>
</reference>
<reference key="2">
    <citation type="journal article" date="2020" name="J. Cell. Physiol.">
        <title>TCP11L2 promotes bovine skeletal muscle-derived satellite cell migration and differentiation via FMNL2.</title>
        <authorList>
            <person name="Li S."/>
            <person name="Wang Z."/>
            <person name="Tong H."/>
            <person name="Li S."/>
            <person name="Yan Y."/>
        </authorList>
    </citation>
    <scope>FUNCTION</scope>
    <scope>INTERACTION WITH FMNL2</scope>
    <scope>SUBCELLULAR LOCATION</scope>
    <scope>INDUCTION</scope>
</reference>
<evidence type="ECO:0000250" key="1">
    <source>
        <dbReference type="UniProtKB" id="Q568Z0"/>
    </source>
</evidence>
<evidence type="ECO:0000250" key="2">
    <source>
        <dbReference type="UniProtKB" id="Q8N4U5"/>
    </source>
</evidence>
<evidence type="ECO:0000256" key="3">
    <source>
        <dbReference type="SAM" id="MobiDB-lite"/>
    </source>
</evidence>
<evidence type="ECO:0000269" key="4">
    <source>
    </source>
</evidence>
<evidence type="ECO:0000305" key="5"/>
<evidence type="ECO:0000305" key="6">
    <source>
    </source>
</evidence>